<sequence>MARVKRGVTAHAKHKKVLDQAAGFRGRRKNTIRTAKAAVDRSKQYAYRDRKNRKRSFRALWIQRINAAVREQGLTYGRFIDGLAKAGIEIDRKVLSDIAIHEPEAFAALVASAKKALEYLKNTSMPNAFEGAVR</sequence>
<keyword id="KW-1185">Reference proteome</keyword>
<keyword id="KW-0687">Ribonucleoprotein</keyword>
<keyword id="KW-0689">Ribosomal protein</keyword>
<keyword id="KW-0694">RNA-binding</keyword>
<keyword id="KW-0699">rRNA-binding</keyword>
<gene>
    <name evidence="1" type="primary">rplT</name>
    <name type="ordered locus">BCAN_A2164</name>
</gene>
<feature type="chain" id="PRO_1000080059" description="Large ribosomal subunit protein bL20">
    <location>
        <begin position="1"/>
        <end position="134"/>
    </location>
</feature>
<protein>
    <recommendedName>
        <fullName evidence="1">Large ribosomal subunit protein bL20</fullName>
    </recommendedName>
    <alternativeName>
        <fullName evidence="2">50S ribosomal protein L20</fullName>
    </alternativeName>
</protein>
<name>RL20_BRUC2</name>
<evidence type="ECO:0000255" key="1">
    <source>
        <dbReference type="HAMAP-Rule" id="MF_00382"/>
    </source>
</evidence>
<evidence type="ECO:0000305" key="2"/>
<accession>A9M9V2</accession>
<proteinExistence type="inferred from homology"/>
<organism>
    <name type="scientific">Brucella canis (strain ATCC 23365 / NCTC 10854 / RM-666)</name>
    <dbReference type="NCBI Taxonomy" id="483179"/>
    <lineage>
        <taxon>Bacteria</taxon>
        <taxon>Pseudomonadati</taxon>
        <taxon>Pseudomonadota</taxon>
        <taxon>Alphaproteobacteria</taxon>
        <taxon>Hyphomicrobiales</taxon>
        <taxon>Brucellaceae</taxon>
        <taxon>Brucella/Ochrobactrum group</taxon>
        <taxon>Brucella</taxon>
    </lineage>
</organism>
<dbReference type="EMBL" id="CP000872">
    <property type="protein sequence ID" value="ABX63147.1"/>
    <property type="molecule type" value="Genomic_DNA"/>
</dbReference>
<dbReference type="RefSeq" id="WP_002965185.1">
    <property type="nucleotide sequence ID" value="NC_010103.1"/>
</dbReference>
<dbReference type="SMR" id="A9M9V2"/>
<dbReference type="GeneID" id="97534622"/>
<dbReference type="KEGG" id="bcs:BCAN_A2164"/>
<dbReference type="HOGENOM" id="CLU_123265_0_1_5"/>
<dbReference type="PhylomeDB" id="A9M9V2"/>
<dbReference type="Proteomes" id="UP000001385">
    <property type="component" value="Chromosome I"/>
</dbReference>
<dbReference type="GO" id="GO:1990904">
    <property type="term" value="C:ribonucleoprotein complex"/>
    <property type="evidence" value="ECO:0007669"/>
    <property type="project" value="UniProtKB-KW"/>
</dbReference>
<dbReference type="GO" id="GO:0005840">
    <property type="term" value="C:ribosome"/>
    <property type="evidence" value="ECO:0007669"/>
    <property type="project" value="UniProtKB-KW"/>
</dbReference>
<dbReference type="GO" id="GO:0019843">
    <property type="term" value="F:rRNA binding"/>
    <property type="evidence" value="ECO:0007669"/>
    <property type="project" value="UniProtKB-UniRule"/>
</dbReference>
<dbReference type="GO" id="GO:0003735">
    <property type="term" value="F:structural constituent of ribosome"/>
    <property type="evidence" value="ECO:0007669"/>
    <property type="project" value="InterPro"/>
</dbReference>
<dbReference type="GO" id="GO:0000027">
    <property type="term" value="P:ribosomal large subunit assembly"/>
    <property type="evidence" value="ECO:0007669"/>
    <property type="project" value="UniProtKB-UniRule"/>
</dbReference>
<dbReference type="GO" id="GO:0006412">
    <property type="term" value="P:translation"/>
    <property type="evidence" value="ECO:0007669"/>
    <property type="project" value="InterPro"/>
</dbReference>
<dbReference type="CDD" id="cd07026">
    <property type="entry name" value="Ribosomal_L20"/>
    <property type="match status" value="1"/>
</dbReference>
<dbReference type="FunFam" id="1.10.1900.20:FF:000001">
    <property type="entry name" value="50S ribosomal protein L20"/>
    <property type="match status" value="1"/>
</dbReference>
<dbReference type="Gene3D" id="6.10.160.10">
    <property type="match status" value="1"/>
</dbReference>
<dbReference type="Gene3D" id="1.10.1900.20">
    <property type="entry name" value="Ribosomal protein L20"/>
    <property type="match status" value="1"/>
</dbReference>
<dbReference type="HAMAP" id="MF_00382">
    <property type="entry name" value="Ribosomal_bL20"/>
    <property type="match status" value="1"/>
</dbReference>
<dbReference type="InterPro" id="IPR005813">
    <property type="entry name" value="Ribosomal_bL20"/>
</dbReference>
<dbReference type="InterPro" id="IPR049946">
    <property type="entry name" value="RIBOSOMAL_L20_CS"/>
</dbReference>
<dbReference type="InterPro" id="IPR035566">
    <property type="entry name" value="Ribosomal_protein_bL20_C"/>
</dbReference>
<dbReference type="NCBIfam" id="TIGR01032">
    <property type="entry name" value="rplT_bact"/>
    <property type="match status" value="1"/>
</dbReference>
<dbReference type="PANTHER" id="PTHR10986">
    <property type="entry name" value="39S RIBOSOMAL PROTEIN L20"/>
    <property type="match status" value="1"/>
</dbReference>
<dbReference type="Pfam" id="PF00453">
    <property type="entry name" value="Ribosomal_L20"/>
    <property type="match status" value="1"/>
</dbReference>
<dbReference type="PRINTS" id="PR00062">
    <property type="entry name" value="RIBOSOMALL20"/>
</dbReference>
<dbReference type="SUPFAM" id="SSF74731">
    <property type="entry name" value="Ribosomal protein L20"/>
    <property type="match status" value="1"/>
</dbReference>
<dbReference type="PROSITE" id="PS00937">
    <property type="entry name" value="RIBOSOMAL_L20"/>
    <property type="match status" value="1"/>
</dbReference>
<comment type="function">
    <text evidence="1">Binds directly to 23S ribosomal RNA and is necessary for the in vitro assembly process of the 50S ribosomal subunit. It is not involved in the protein synthesizing functions of that subunit.</text>
</comment>
<comment type="similarity">
    <text evidence="1">Belongs to the bacterial ribosomal protein bL20 family.</text>
</comment>
<reference key="1">
    <citation type="submission" date="2007-10" db="EMBL/GenBank/DDBJ databases">
        <title>Brucella canis ATCC 23365 whole genome shotgun sequencing project.</title>
        <authorList>
            <person name="Setubal J.C."/>
            <person name="Bowns C."/>
            <person name="Boyle S."/>
            <person name="Crasta O.R."/>
            <person name="Czar M.J."/>
            <person name="Dharmanolla C."/>
            <person name="Gillespie J.J."/>
            <person name="Kenyon R.W."/>
            <person name="Lu J."/>
            <person name="Mane S."/>
            <person name="Mohapatra S."/>
            <person name="Nagrani S."/>
            <person name="Purkayastha A."/>
            <person name="Rajasimha H.K."/>
            <person name="Shallom J.M."/>
            <person name="Shallom S."/>
            <person name="Shukla M."/>
            <person name="Snyder E.E."/>
            <person name="Sobral B.W."/>
            <person name="Wattam A.R."/>
            <person name="Will R."/>
            <person name="Williams K."/>
            <person name="Yoo H."/>
            <person name="Bruce D."/>
            <person name="Detter C."/>
            <person name="Munk C."/>
            <person name="Brettin T.S."/>
        </authorList>
    </citation>
    <scope>NUCLEOTIDE SEQUENCE [LARGE SCALE GENOMIC DNA]</scope>
    <source>
        <strain>ATCC 23365 / NCTC 10854 / RM-666</strain>
    </source>
</reference>